<keyword id="KW-0046">Antibiotic resistance</keyword>
<keyword id="KW-1003">Cell membrane</keyword>
<keyword id="KW-0133">Cell shape</keyword>
<keyword id="KW-0961">Cell wall biogenesis/degradation</keyword>
<keyword id="KW-0378">Hydrolase</keyword>
<keyword id="KW-0472">Membrane</keyword>
<keyword id="KW-0573">Peptidoglycan synthesis</keyword>
<keyword id="KW-1185">Reference proteome</keyword>
<keyword id="KW-0812">Transmembrane</keyword>
<keyword id="KW-1133">Transmembrane helix</keyword>
<dbReference type="EC" id="3.6.1.27" evidence="1"/>
<dbReference type="EMBL" id="CP000023">
    <property type="protein sequence ID" value="AAV59885.1"/>
    <property type="molecule type" value="Genomic_DNA"/>
</dbReference>
<dbReference type="SMR" id="Q5M6A1"/>
<dbReference type="STRING" id="264199.stu0160"/>
<dbReference type="KEGG" id="stl:stu0160"/>
<dbReference type="eggNOG" id="COG1968">
    <property type="taxonomic scope" value="Bacteria"/>
</dbReference>
<dbReference type="HOGENOM" id="CLU_060296_2_0_9"/>
<dbReference type="Proteomes" id="UP000001170">
    <property type="component" value="Chromosome"/>
</dbReference>
<dbReference type="GO" id="GO:0005886">
    <property type="term" value="C:plasma membrane"/>
    <property type="evidence" value="ECO:0007669"/>
    <property type="project" value="UniProtKB-SubCell"/>
</dbReference>
<dbReference type="GO" id="GO:0050380">
    <property type="term" value="F:undecaprenyl-diphosphatase activity"/>
    <property type="evidence" value="ECO:0007669"/>
    <property type="project" value="UniProtKB-UniRule"/>
</dbReference>
<dbReference type="GO" id="GO:0071555">
    <property type="term" value="P:cell wall organization"/>
    <property type="evidence" value="ECO:0007669"/>
    <property type="project" value="UniProtKB-KW"/>
</dbReference>
<dbReference type="GO" id="GO:0009252">
    <property type="term" value="P:peptidoglycan biosynthetic process"/>
    <property type="evidence" value="ECO:0007669"/>
    <property type="project" value="UniProtKB-KW"/>
</dbReference>
<dbReference type="GO" id="GO:0008360">
    <property type="term" value="P:regulation of cell shape"/>
    <property type="evidence" value="ECO:0007669"/>
    <property type="project" value="UniProtKB-KW"/>
</dbReference>
<dbReference type="GO" id="GO:0046677">
    <property type="term" value="P:response to antibiotic"/>
    <property type="evidence" value="ECO:0007669"/>
    <property type="project" value="UniProtKB-UniRule"/>
</dbReference>
<dbReference type="HAMAP" id="MF_01006">
    <property type="entry name" value="Undec_diphosphatase"/>
    <property type="match status" value="1"/>
</dbReference>
<dbReference type="InterPro" id="IPR003824">
    <property type="entry name" value="UppP"/>
</dbReference>
<dbReference type="NCBIfam" id="NF001389">
    <property type="entry name" value="PRK00281.1-2"/>
    <property type="match status" value="1"/>
</dbReference>
<dbReference type="NCBIfam" id="NF001390">
    <property type="entry name" value="PRK00281.1-4"/>
    <property type="match status" value="1"/>
</dbReference>
<dbReference type="NCBIfam" id="NF001391">
    <property type="entry name" value="PRK00281.1-5"/>
    <property type="match status" value="1"/>
</dbReference>
<dbReference type="NCBIfam" id="TIGR00753">
    <property type="entry name" value="undec_PP_bacA"/>
    <property type="match status" value="1"/>
</dbReference>
<dbReference type="PANTHER" id="PTHR30622">
    <property type="entry name" value="UNDECAPRENYL-DIPHOSPHATASE"/>
    <property type="match status" value="1"/>
</dbReference>
<dbReference type="PANTHER" id="PTHR30622:SF3">
    <property type="entry name" value="UNDECAPRENYL-DIPHOSPHATASE"/>
    <property type="match status" value="1"/>
</dbReference>
<dbReference type="Pfam" id="PF02673">
    <property type="entry name" value="BacA"/>
    <property type="match status" value="1"/>
</dbReference>
<feature type="chain" id="PRO_0000151221" description="Undecaprenyl-diphosphatase">
    <location>
        <begin position="1"/>
        <end position="288"/>
    </location>
</feature>
<feature type="transmembrane region" description="Helical" evidence="1">
    <location>
        <begin position="25"/>
        <end position="45"/>
    </location>
</feature>
<feature type="transmembrane region" description="Helical" evidence="1">
    <location>
        <begin position="53"/>
        <end position="73"/>
    </location>
</feature>
<feature type="transmembrane region" description="Helical" evidence="1">
    <location>
        <begin position="93"/>
        <end position="113"/>
    </location>
</feature>
<feature type="transmembrane region" description="Helical" evidence="1">
    <location>
        <begin position="121"/>
        <end position="141"/>
    </location>
</feature>
<feature type="transmembrane region" description="Helical" evidence="1">
    <location>
        <begin position="171"/>
        <end position="191"/>
    </location>
</feature>
<feature type="transmembrane region" description="Helical" evidence="1">
    <location>
        <begin position="196"/>
        <end position="216"/>
    </location>
</feature>
<feature type="transmembrane region" description="Helical" evidence="1">
    <location>
        <begin position="231"/>
        <end position="251"/>
    </location>
</feature>
<feature type="transmembrane region" description="Helical" evidence="1">
    <location>
        <begin position="263"/>
        <end position="283"/>
    </location>
</feature>
<protein>
    <recommendedName>
        <fullName evidence="1">Undecaprenyl-diphosphatase</fullName>
        <ecNumber evidence="1">3.6.1.27</ecNumber>
    </recommendedName>
    <alternativeName>
        <fullName evidence="1">Bacitracin resistance protein</fullName>
    </alternativeName>
    <alternativeName>
        <fullName evidence="1">Undecaprenyl pyrophosphate phosphatase</fullName>
    </alternativeName>
</protein>
<reference key="1">
    <citation type="journal article" date="2004" name="Nat. Biotechnol.">
        <title>Complete sequence and comparative genome analysis of the dairy bacterium Streptococcus thermophilus.</title>
        <authorList>
            <person name="Bolotin A."/>
            <person name="Quinquis B."/>
            <person name="Renault P."/>
            <person name="Sorokin A."/>
            <person name="Ehrlich S.D."/>
            <person name="Kulakauskas S."/>
            <person name="Lapidus A."/>
            <person name="Goltsman E."/>
            <person name="Mazur M."/>
            <person name="Pusch G.D."/>
            <person name="Fonstein M."/>
            <person name="Overbeek R."/>
            <person name="Kyprides N."/>
            <person name="Purnelle B."/>
            <person name="Prozzi D."/>
            <person name="Ngui K."/>
            <person name="Masuy D."/>
            <person name="Hancy F."/>
            <person name="Burteau S."/>
            <person name="Boutry M."/>
            <person name="Delcour J."/>
            <person name="Goffeau A."/>
            <person name="Hols P."/>
        </authorList>
    </citation>
    <scope>NUCLEOTIDE SEQUENCE [LARGE SCALE GENOMIC DNA]</scope>
    <source>
        <strain>ATCC BAA-250 / LMG 18311</strain>
    </source>
</reference>
<name>UPPP_STRT2</name>
<sequence>MEIIMQTAQYIIELLKAVFLGIVEGITEWLPISSTGHLILVNEFLNLRQSKDFIDMFNIVIQLGAILAVMVIYFKRLNPFQPGKTAREVQLTWKLWLKVVIACIPSAFFGLLLDDWMEAHLSNFFVVAIMLVVYGIAFIWIEDRNRRVDPKVTDLARMSYKTAFYIGLFQVLSIIPGTSRSGATILGGIIVGTSRSVAADFTFFLGIPTMFGYSGLKAVKYFIDGNTLTGGQAAILLVASVTAFLVSLFVIRFLMNYIKKHDFTVFGKYRIVLGIIVLFYGAVKLIFG</sequence>
<gene>
    <name evidence="1" type="primary">uppP</name>
    <name type="synonym">bacA</name>
    <name type="ordered locus">stu0160</name>
</gene>
<accession>Q5M6A1</accession>
<comment type="function">
    <text evidence="1">Catalyzes the dephosphorylation of undecaprenyl diphosphate (UPP). Confers resistance to bacitracin.</text>
</comment>
<comment type="catalytic activity">
    <reaction evidence="1">
        <text>di-trans,octa-cis-undecaprenyl diphosphate + H2O = di-trans,octa-cis-undecaprenyl phosphate + phosphate + H(+)</text>
        <dbReference type="Rhea" id="RHEA:28094"/>
        <dbReference type="ChEBI" id="CHEBI:15377"/>
        <dbReference type="ChEBI" id="CHEBI:15378"/>
        <dbReference type="ChEBI" id="CHEBI:43474"/>
        <dbReference type="ChEBI" id="CHEBI:58405"/>
        <dbReference type="ChEBI" id="CHEBI:60392"/>
        <dbReference type="EC" id="3.6.1.27"/>
    </reaction>
</comment>
<comment type="subcellular location">
    <subcellularLocation>
        <location evidence="1">Cell membrane</location>
        <topology evidence="1">Multi-pass membrane protein</topology>
    </subcellularLocation>
</comment>
<comment type="miscellaneous">
    <text>Bacitracin is thought to be involved in the inhibition of peptidoglycan synthesis by sequestering undecaprenyl diphosphate, thereby reducing the pool of lipid carrier available.</text>
</comment>
<comment type="similarity">
    <text evidence="1">Belongs to the UppP family.</text>
</comment>
<proteinExistence type="inferred from homology"/>
<organism>
    <name type="scientific">Streptococcus thermophilus (strain ATCC BAA-250 / LMG 18311)</name>
    <dbReference type="NCBI Taxonomy" id="264199"/>
    <lineage>
        <taxon>Bacteria</taxon>
        <taxon>Bacillati</taxon>
        <taxon>Bacillota</taxon>
        <taxon>Bacilli</taxon>
        <taxon>Lactobacillales</taxon>
        <taxon>Streptococcaceae</taxon>
        <taxon>Streptococcus</taxon>
    </lineage>
</organism>
<evidence type="ECO:0000255" key="1">
    <source>
        <dbReference type="HAMAP-Rule" id="MF_01006"/>
    </source>
</evidence>